<organism>
    <name type="scientific">Aeromonas hydrophila subsp. hydrophila (strain ATCC 7966 / DSM 30187 / BCRC 13018 / CCUG 14551 / JCM 1027 / KCTC 2358 / NCIMB 9240 / NCTC 8049)</name>
    <dbReference type="NCBI Taxonomy" id="380703"/>
    <lineage>
        <taxon>Bacteria</taxon>
        <taxon>Pseudomonadati</taxon>
        <taxon>Pseudomonadota</taxon>
        <taxon>Gammaproteobacteria</taxon>
        <taxon>Aeromonadales</taxon>
        <taxon>Aeromonadaceae</taxon>
        <taxon>Aeromonas</taxon>
    </lineage>
</organism>
<keyword id="KW-0328">Glycosyltransferase</keyword>
<keyword id="KW-0479">Metal-binding</keyword>
<keyword id="KW-0671">Queuosine biosynthesis</keyword>
<keyword id="KW-1185">Reference proteome</keyword>
<keyword id="KW-0808">Transferase</keyword>
<keyword id="KW-0819">tRNA processing</keyword>
<keyword id="KW-0862">Zinc</keyword>
<sequence length="378" mass="43001">MKFELKTTDGRARRGQLVFERGTVQTPAFMPVGTYGTVKGMTPEEVRETGAQILLGNTFHLWLRPGQEVMRAHGDLHDFMNWQGPILTDSGGFQVFSLGHIRKITEAGVHFRHPINGEKIFLDPEKSMEIQYDLGSDIVMIFDECTPYPATYEEARKSMEMSLRWGKRSRDKFDALGNKNALFGIIQGSVYEDLRDVSLDGLLEIGFDGYAVGGLAVGEPKEDMHRILEHVCPKIPADKPRYLMGVGKPEDLVEGVRRGIDMFDCVMPTRNARNGHLFTTDGVVKIRNAKYREDTSTLDADCDCYTCKNYTRSYLYHLDKCNEILGARLNTIHNLRYYQRVMQGLRDAIEQGKLDDFVTEFYRRQGKPVPPLAENDVK</sequence>
<dbReference type="EC" id="2.4.2.29" evidence="1"/>
<dbReference type="EMBL" id="CP000462">
    <property type="protein sequence ID" value="ABK37967.1"/>
    <property type="molecule type" value="Genomic_DNA"/>
</dbReference>
<dbReference type="RefSeq" id="WP_010634306.1">
    <property type="nucleotide sequence ID" value="NC_008570.1"/>
</dbReference>
<dbReference type="RefSeq" id="YP_856271.1">
    <property type="nucleotide sequence ID" value="NC_008570.1"/>
</dbReference>
<dbReference type="SMR" id="A0KJ20"/>
<dbReference type="STRING" id="380703.AHA_1735"/>
<dbReference type="EnsemblBacteria" id="ABK37967">
    <property type="protein sequence ID" value="ABK37967"/>
    <property type="gene ID" value="AHA_1735"/>
</dbReference>
<dbReference type="GeneID" id="4490304"/>
<dbReference type="KEGG" id="aha:AHA_1735"/>
<dbReference type="PATRIC" id="fig|380703.7.peg.1750"/>
<dbReference type="eggNOG" id="COG0343">
    <property type="taxonomic scope" value="Bacteria"/>
</dbReference>
<dbReference type="HOGENOM" id="CLU_022060_0_1_6"/>
<dbReference type="OrthoDB" id="9805417at2"/>
<dbReference type="UniPathway" id="UPA00392"/>
<dbReference type="Proteomes" id="UP000000756">
    <property type="component" value="Chromosome"/>
</dbReference>
<dbReference type="GO" id="GO:0005829">
    <property type="term" value="C:cytosol"/>
    <property type="evidence" value="ECO:0007669"/>
    <property type="project" value="TreeGrafter"/>
</dbReference>
<dbReference type="GO" id="GO:0046872">
    <property type="term" value="F:metal ion binding"/>
    <property type="evidence" value="ECO:0007669"/>
    <property type="project" value="UniProtKB-KW"/>
</dbReference>
<dbReference type="GO" id="GO:0008479">
    <property type="term" value="F:tRNA-guanosine(34) queuine transglycosylase activity"/>
    <property type="evidence" value="ECO:0007669"/>
    <property type="project" value="UniProtKB-UniRule"/>
</dbReference>
<dbReference type="GO" id="GO:0008616">
    <property type="term" value="P:queuosine biosynthetic process"/>
    <property type="evidence" value="ECO:0007669"/>
    <property type="project" value="UniProtKB-UniRule"/>
</dbReference>
<dbReference type="GO" id="GO:0002099">
    <property type="term" value="P:tRNA wobble guanine modification"/>
    <property type="evidence" value="ECO:0007669"/>
    <property type="project" value="TreeGrafter"/>
</dbReference>
<dbReference type="GO" id="GO:0101030">
    <property type="term" value="P:tRNA-guanine transglycosylation"/>
    <property type="evidence" value="ECO:0007669"/>
    <property type="project" value="InterPro"/>
</dbReference>
<dbReference type="FunFam" id="3.20.20.105:FF:000001">
    <property type="entry name" value="Queuine tRNA-ribosyltransferase"/>
    <property type="match status" value="1"/>
</dbReference>
<dbReference type="Gene3D" id="3.20.20.105">
    <property type="entry name" value="Queuine tRNA-ribosyltransferase-like"/>
    <property type="match status" value="1"/>
</dbReference>
<dbReference type="HAMAP" id="MF_00168">
    <property type="entry name" value="Q_tRNA_Tgt"/>
    <property type="match status" value="1"/>
</dbReference>
<dbReference type="InterPro" id="IPR050076">
    <property type="entry name" value="ArchSynthase1/Queuine_TRR"/>
</dbReference>
<dbReference type="InterPro" id="IPR004803">
    <property type="entry name" value="TGT"/>
</dbReference>
<dbReference type="InterPro" id="IPR036511">
    <property type="entry name" value="TGT-like_sf"/>
</dbReference>
<dbReference type="InterPro" id="IPR002616">
    <property type="entry name" value="tRNA_ribo_trans-like"/>
</dbReference>
<dbReference type="NCBIfam" id="TIGR00430">
    <property type="entry name" value="Q_tRNA_tgt"/>
    <property type="match status" value="1"/>
</dbReference>
<dbReference type="NCBIfam" id="TIGR00449">
    <property type="entry name" value="tgt_general"/>
    <property type="match status" value="1"/>
</dbReference>
<dbReference type="PANTHER" id="PTHR46499">
    <property type="entry name" value="QUEUINE TRNA-RIBOSYLTRANSFERASE"/>
    <property type="match status" value="1"/>
</dbReference>
<dbReference type="PANTHER" id="PTHR46499:SF1">
    <property type="entry name" value="QUEUINE TRNA-RIBOSYLTRANSFERASE"/>
    <property type="match status" value="1"/>
</dbReference>
<dbReference type="Pfam" id="PF01702">
    <property type="entry name" value="TGT"/>
    <property type="match status" value="1"/>
</dbReference>
<dbReference type="SUPFAM" id="SSF51713">
    <property type="entry name" value="tRNA-guanine transglycosylase"/>
    <property type="match status" value="1"/>
</dbReference>
<comment type="function">
    <text evidence="1">Catalyzes the base-exchange of a guanine (G) residue with the queuine precursor 7-aminomethyl-7-deazaguanine (PreQ1) at position 34 (anticodon wobble position) in tRNAs with GU(N) anticodons (tRNA-Asp, -Asn, -His and -Tyr). Catalysis occurs through a double-displacement mechanism. The nucleophile active site attacks the C1' of nucleotide 34 to detach the guanine base from the RNA, forming a covalent enzyme-RNA intermediate. The proton acceptor active site deprotonates the incoming PreQ1, allowing a nucleophilic attack on the C1' of the ribose to form the product. After dissociation, two additional enzymatic reactions on the tRNA convert PreQ1 to queuine (Q), resulting in the hypermodified nucleoside queuosine (7-(((4,5-cis-dihydroxy-2-cyclopenten-1-yl)amino)methyl)-7-deazaguanosine).</text>
</comment>
<comment type="catalytic activity">
    <reaction evidence="1">
        <text>7-aminomethyl-7-carbaguanine + guanosine(34) in tRNA = 7-aminomethyl-7-carbaguanosine(34) in tRNA + guanine</text>
        <dbReference type="Rhea" id="RHEA:24104"/>
        <dbReference type="Rhea" id="RHEA-COMP:10341"/>
        <dbReference type="Rhea" id="RHEA-COMP:10342"/>
        <dbReference type="ChEBI" id="CHEBI:16235"/>
        <dbReference type="ChEBI" id="CHEBI:58703"/>
        <dbReference type="ChEBI" id="CHEBI:74269"/>
        <dbReference type="ChEBI" id="CHEBI:82833"/>
        <dbReference type="EC" id="2.4.2.29"/>
    </reaction>
</comment>
<comment type="cofactor">
    <cofactor evidence="1">
        <name>Zn(2+)</name>
        <dbReference type="ChEBI" id="CHEBI:29105"/>
    </cofactor>
    <text evidence="1">Binds 1 zinc ion per subunit.</text>
</comment>
<comment type="pathway">
    <text evidence="1">tRNA modification; tRNA-queuosine biosynthesis.</text>
</comment>
<comment type="subunit">
    <text evidence="1">Homodimer. Within each dimer, one monomer is responsible for RNA recognition and catalysis, while the other monomer binds to the replacement base PreQ1.</text>
</comment>
<comment type="similarity">
    <text evidence="1">Belongs to the queuine tRNA-ribosyltransferase family.</text>
</comment>
<proteinExistence type="inferred from homology"/>
<reference key="1">
    <citation type="journal article" date="2006" name="J. Bacteriol.">
        <title>Genome sequence of Aeromonas hydrophila ATCC 7966T: jack of all trades.</title>
        <authorList>
            <person name="Seshadri R."/>
            <person name="Joseph S.W."/>
            <person name="Chopra A.K."/>
            <person name="Sha J."/>
            <person name="Shaw J."/>
            <person name="Graf J."/>
            <person name="Haft D.H."/>
            <person name="Wu M."/>
            <person name="Ren Q."/>
            <person name="Rosovitz M.J."/>
            <person name="Madupu R."/>
            <person name="Tallon L."/>
            <person name="Kim M."/>
            <person name="Jin S."/>
            <person name="Vuong H."/>
            <person name="Stine O.C."/>
            <person name="Ali A."/>
            <person name="Horneman A.J."/>
            <person name="Heidelberg J.F."/>
        </authorList>
    </citation>
    <scope>NUCLEOTIDE SEQUENCE [LARGE SCALE GENOMIC DNA]</scope>
    <source>
        <strain>ATCC 7966 / DSM 30187 / BCRC 13018 / CCUG 14551 / JCM 1027 / KCTC 2358 / NCIMB 9240 / NCTC 8049</strain>
    </source>
</reference>
<accession>A0KJ20</accession>
<gene>
    <name evidence="1" type="primary">tgt</name>
    <name type="ordered locus">AHA_1735</name>
</gene>
<evidence type="ECO:0000255" key="1">
    <source>
        <dbReference type="HAMAP-Rule" id="MF_00168"/>
    </source>
</evidence>
<feature type="chain" id="PRO_1000016760" description="Queuine tRNA-ribosyltransferase">
    <location>
        <begin position="1"/>
        <end position="378"/>
    </location>
</feature>
<feature type="region of interest" description="RNA binding" evidence="1">
    <location>
        <begin position="245"/>
        <end position="251"/>
    </location>
</feature>
<feature type="region of interest" description="RNA binding; important for wobble base 34 recognition" evidence="1">
    <location>
        <begin position="269"/>
        <end position="273"/>
    </location>
</feature>
<feature type="active site" description="Proton acceptor" evidence="1">
    <location>
        <position position="89"/>
    </location>
</feature>
<feature type="active site" description="Nucleophile" evidence="1">
    <location>
        <position position="264"/>
    </location>
</feature>
<feature type="binding site" evidence="1">
    <location>
        <begin position="89"/>
        <end position="93"/>
    </location>
    <ligand>
        <name>substrate</name>
    </ligand>
</feature>
<feature type="binding site" evidence="1">
    <location>
        <position position="143"/>
    </location>
    <ligand>
        <name>substrate</name>
    </ligand>
</feature>
<feature type="binding site" evidence="1">
    <location>
        <position position="187"/>
    </location>
    <ligand>
        <name>substrate</name>
    </ligand>
</feature>
<feature type="binding site" evidence="1">
    <location>
        <position position="214"/>
    </location>
    <ligand>
        <name>substrate</name>
    </ligand>
</feature>
<feature type="binding site" evidence="1">
    <location>
        <position position="302"/>
    </location>
    <ligand>
        <name>Zn(2+)</name>
        <dbReference type="ChEBI" id="CHEBI:29105"/>
    </ligand>
</feature>
<feature type="binding site" evidence="1">
    <location>
        <position position="304"/>
    </location>
    <ligand>
        <name>Zn(2+)</name>
        <dbReference type="ChEBI" id="CHEBI:29105"/>
    </ligand>
</feature>
<feature type="binding site" evidence="1">
    <location>
        <position position="307"/>
    </location>
    <ligand>
        <name>Zn(2+)</name>
        <dbReference type="ChEBI" id="CHEBI:29105"/>
    </ligand>
</feature>
<feature type="binding site" evidence="1">
    <location>
        <position position="333"/>
    </location>
    <ligand>
        <name>Zn(2+)</name>
        <dbReference type="ChEBI" id="CHEBI:29105"/>
    </ligand>
</feature>
<protein>
    <recommendedName>
        <fullName evidence="1">Queuine tRNA-ribosyltransferase</fullName>
        <ecNumber evidence="1">2.4.2.29</ecNumber>
    </recommendedName>
    <alternativeName>
        <fullName evidence="1">Guanine insertion enzyme</fullName>
    </alternativeName>
    <alternativeName>
        <fullName evidence="1">tRNA-guanine transglycosylase</fullName>
    </alternativeName>
</protein>
<name>TGT_AERHH</name>